<protein>
    <recommendedName>
        <fullName evidence="1">Deoxyribose-phosphate aldolase</fullName>
        <shortName evidence="1">DERA</shortName>
        <ecNumber evidence="1">4.1.2.4</ecNumber>
    </recommendedName>
    <alternativeName>
        <fullName evidence="1">2-deoxy-D-ribose 5-phosphate aldolase</fullName>
    </alternativeName>
    <alternativeName>
        <fullName evidence="1">Phosphodeoxyriboaldolase</fullName>
        <shortName evidence="1">Deoxyriboaldolase</shortName>
    </alternativeName>
</protein>
<feature type="chain" id="PRO_1000015344" description="Deoxyribose-phosphate aldolase">
    <location>
        <begin position="1"/>
        <end position="223"/>
    </location>
</feature>
<feature type="active site" description="Proton donor/acceptor" evidence="1">
    <location>
        <position position="91"/>
    </location>
</feature>
<feature type="active site" description="Schiff-base intermediate with acetaldehyde" evidence="1">
    <location>
        <position position="153"/>
    </location>
</feature>
<feature type="active site" description="Proton donor/acceptor" evidence="1">
    <location>
        <position position="182"/>
    </location>
</feature>
<organism>
    <name type="scientific">Yersinia pestis (strain Pestoides F)</name>
    <dbReference type="NCBI Taxonomy" id="386656"/>
    <lineage>
        <taxon>Bacteria</taxon>
        <taxon>Pseudomonadati</taxon>
        <taxon>Pseudomonadota</taxon>
        <taxon>Gammaproteobacteria</taxon>
        <taxon>Enterobacterales</taxon>
        <taxon>Yersiniaceae</taxon>
        <taxon>Yersinia</taxon>
    </lineage>
</organism>
<proteinExistence type="inferred from homology"/>
<comment type="function">
    <text evidence="1">Catalyzes a reversible aldol reaction between acetaldehyde and D-glyceraldehyde 3-phosphate to generate 2-deoxy-D-ribose 5-phosphate.</text>
</comment>
<comment type="catalytic activity">
    <reaction evidence="1">
        <text>2-deoxy-D-ribose 5-phosphate = D-glyceraldehyde 3-phosphate + acetaldehyde</text>
        <dbReference type="Rhea" id="RHEA:12821"/>
        <dbReference type="ChEBI" id="CHEBI:15343"/>
        <dbReference type="ChEBI" id="CHEBI:59776"/>
        <dbReference type="ChEBI" id="CHEBI:62877"/>
        <dbReference type="EC" id="4.1.2.4"/>
    </reaction>
</comment>
<comment type="pathway">
    <text evidence="1">Carbohydrate degradation; 2-deoxy-D-ribose 1-phosphate degradation; D-glyceraldehyde 3-phosphate and acetaldehyde from 2-deoxy-alpha-D-ribose 1-phosphate: step 2/2.</text>
</comment>
<comment type="subcellular location">
    <subcellularLocation>
        <location evidence="1">Cytoplasm</location>
    </subcellularLocation>
</comment>
<comment type="similarity">
    <text evidence="1">Belongs to the DeoC/FbaB aldolase family. DeoC type 1 subfamily.</text>
</comment>
<sequence length="223" mass="23266">MTTNYAHYIDHTLLAMDATEAQIIKLCEEAKQHHFYAVCVNSGYVPVAAQQLAGSSVKVCSVIGFPLGAGLTAAKAFEAQAAINAGAQEIDMVINVGWLKSGKIADVKADIKAVRDNCAATPLKVILETCLLSDEQIVQVCEMCRELDVAFVKTSTGFSTGGAKEEHVKLMRATVGPVMGVKASGAVRDRATAETMIQAGATRIGTSSGVAIVSGQQAAASGY</sequence>
<keyword id="KW-0963">Cytoplasm</keyword>
<keyword id="KW-0456">Lyase</keyword>
<keyword id="KW-0704">Schiff base</keyword>
<accession>A4TN86</accession>
<gene>
    <name evidence="1" type="primary">deoC</name>
    <name type="ordered locus">YPDSF_2373</name>
</gene>
<evidence type="ECO:0000255" key="1">
    <source>
        <dbReference type="HAMAP-Rule" id="MF_00114"/>
    </source>
</evidence>
<dbReference type="EC" id="4.1.2.4" evidence="1"/>
<dbReference type="EMBL" id="CP000668">
    <property type="protein sequence ID" value="ABP40748.1"/>
    <property type="molecule type" value="Genomic_DNA"/>
</dbReference>
<dbReference type="RefSeq" id="WP_002208769.1">
    <property type="nucleotide sequence ID" value="NZ_CP009715.1"/>
</dbReference>
<dbReference type="SMR" id="A4TN86"/>
<dbReference type="GeneID" id="57977455"/>
<dbReference type="KEGG" id="ypp:YPDSF_2373"/>
<dbReference type="PATRIC" id="fig|386656.14.peg.3871"/>
<dbReference type="UniPathway" id="UPA00002">
    <property type="reaction ID" value="UER00468"/>
</dbReference>
<dbReference type="GO" id="GO:0005737">
    <property type="term" value="C:cytoplasm"/>
    <property type="evidence" value="ECO:0007669"/>
    <property type="project" value="UniProtKB-SubCell"/>
</dbReference>
<dbReference type="GO" id="GO:0004139">
    <property type="term" value="F:deoxyribose-phosphate aldolase activity"/>
    <property type="evidence" value="ECO:0007669"/>
    <property type="project" value="UniProtKB-UniRule"/>
</dbReference>
<dbReference type="GO" id="GO:0006018">
    <property type="term" value="P:2-deoxyribose 1-phosphate catabolic process"/>
    <property type="evidence" value="ECO:0007669"/>
    <property type="project" value="UniProtKB-UniRule"/>
</dbReference>
<dbReference type="GO" id="GO:0016052">
    <property type="term" value="P:carbohydrate catabolic process"/>
    <property type="evidence" value="ECO:0007669"/>
    <property type="project" value="TreeGrafter"/>
</dbReference>
<dbReference type="GO" id="GO:0009264">
    <property type="term" value="P:deoxyribonucleotide catabolic process"/>
    <property type="evidence" value="ECO:0007669"/>
    <property type="project" value="InterPro"/>
</dbReference>
<dbReference type="CDD" id="cd00959">
    <property type="entry name" value="DeoC"/>
    <property type="match status" value="1"/>
</dbReference>
<dbReference type="FunFam" id="3.20.20.70:FF:000044">
    <property type="entry name" value="Deoxyribose-phosphate aldolase"/>
    <property type="match status" value="1"/>
</dbReference>
<dbReference type="Gene3D" id="3.20.20.70">
    <property type="entry name" value="Aldolase class I"/>
    <property type="match status" value="1"/>
</dbReference>
<dbReference type="HAMAP" id="MF_00114">
    <property type="entry name" value="DeoC_type1"/>
    <property type="match status" value="1"/>
</dbReference>
<dbReference type="InterPro" id="IPR013785">
    <property type="entry name" value="Aldolase_TIM"/>
</dbReference>
<dbReference type="InterPro" id="IPR011343">
    <property type="entry name" value="DeoC"/>
</dbReference>
<dbReference type="InterPro" id="IPR002915">
    <property type="entry name" value="DeoC/FbaB/LacD_aldolase"/>
</dbReference>
<dbReference type="InterPro" id="IPR028581">
    <property type="entry name" value="DeoC_typeI"/>
</dbReference>
<dbReference type="NCBIfam" id="TIGR00126">
    <property type="entry name" value="deoC"/>
    <property type="match status" value="1"/>
</dbReference>
<dbReference type="PANTHER" id="PTHR10889">
    <property type="entry name" value="DEOXYRIBOSE-PHOSPHATE ALDOLASE"/>
    <property type="match status" value="1"/>
</dbReference>
<dbReference type="PANTHER" id="PTHR10889:SF1">
    <property type="entry name" value="DEOXYRIBOSE-PHOSPHATE ALDOLASE"/>
    <property type="match status" value="1"/>
</dbReference>
<dbReference type="Pfam" id="PF01791">
    <property type="entry name" value="DeoC"/>
    <property type="match status" value="1"/>
</dbReference>
<dbReference type="PIRSF" id="PIRSF001357">
    <property type="entry name" value="DeoC"/>
    <property type="match status" value="1"/>
</dbReference>
<dbReference type="SMART" id="SM01133">
    <property type="entry name" value="DeoC"/>
    <property type="match status" value="1"/>
</dbReference>
<dbReference type="SUPFAM" id="SSF51569">
    <property type="entry name" value="Aldolase"/>
    <property type="match status" value="1"/>
</dbReference>
<reference key="1">
    <citation type="submission" date="2007-02" db="EMBL/GenBank/DDBJ databases">
        <title>Complete sequence of chromosome of Yersinia pestis Pestoides F.</title>
        <authorList>
            <consortium name="US DOE Joint Genome Institute"/>
            <person name="Copeland A."/>
            <person name="Lucas S."/>
            <person name="Lapidus A."/>
            <person name="Barry K."/>
            <person name="Detter J.C."/>
            <person name="Glavina del Rio T."/>
            <person name="Hammon N."/>
            <person name="Israni S."/>
            <person name="Dalin E."/>
            <person name="Tice H."/>
            <person name="Pitluck S."/>
            <person name="Di Bartolo G."/>
            <person name="Chain P."/>
            <person name="Malfatti S."/>
            <person name="Shin M."/>
            <person name="Vergez L."/>
            <person name="Schmutz J."/>
            <person name="Larimer F."/>
            <person name="Land M."/>
            <person name="Hauser L."/>
            <person name="Worsham P."/>
            <person name="Chu M."/>
            <person name="Bearden S."/>
            <person name="Garcia E."/>
            <person name="Richardson P."/>
        </authorList>
    </citation>
    <scope>NUCLEOTIDE SEQUENCE [LARGE SCALE GENOMIC DNA]</scope>
    <source>
        <strain>Pestoides F</strain>
    </source>
</reference>
<name>DEOC_YERPP</name>